<keyword id="KW-0131">Cell cycle</keyword>
<keyword id="KW-0132">Cell division</keyword>
<name>MINE_BURCH</name>
<sequence>MSILSFLLGEKKKSASVAKERLQLIIAHERVGGRPPADYLPALQKELVAVISKYVHISDDDIRVSLERQDDLEVLEVKIEIPQA</sequence>
<organism>
    <name type="scientific">Burkholderia cenocepacia (strain HI2424)</name>
    <dbReference type="NCBI Taxonomy" id="331272"/>
    <lineage>
        <taxon>Bacteria</taxon>
        <taxon>Pseudomonadati</taxon>
        <taxon>Pseudomonadota</taxon>
        <taxon>Betaproteobacteria</taxon>
        <taxon>Burkholderiales</taxon>
        <taxon>Burkholderiaceae</taxon>
        <taxon>Burkholderia</taxon>
        <taxon>Burkholderia cepacia complex</taxon>
    </lineage>
</organism>
<dbReference type="EMBL" id="CP000458">
    <property type="protein sequence ID" value="ABK07738.1"/>
    <property type="molecule type" value="Genomic_DNA"/>
</dbReference>
<dbReference type="RefSeq" id="WP_006476634.1">
    <property type="nucleotide sequence ID" value="NC_008542.1"/>
</dbReference>
<dbReference type="SMR" id="A0K5G1"/>
<dbReference type="GeneID" id="93192778"/>
<dbReference type="KEGG" id="bch:Bcen2424_0985"/>
<dbReference type="HOGENOM" id="CLU_137929_2_1_4"/>
<dbReference type="GO" id="GO:0051301">
    <property type="term" value="P:cell division"/>
    <property type="evidence" value="ECO:0007669"/>
    <property type="project" value="UniProtKB-KW"/>
</dbReference>
<dbReference type="GO" id="GO:0032955">
    <property type="term" value="P:regulation of division septum assembly"/>
    <property type="evidence" value="ECO:0007669"/>
    <property type="project" value="InterPro"/>
</dbReference>
<dbReference type="FunFam" id="3.30.1070.10:FF:000001">
    <property type="entry name" value="Cell division topological specificity factor"/>
    <property type="match status" value="1"/>
</dbReference>
<dbReference type="Gene3D" id="3.30.1070.10">
    <property type="entry name" value="Cell division topological specificity factor MinE"/>
    <property type="match status" value="1"/>
</dbReference>
<dbReference type="HAMAP" id="MF_00262">
    <property type="entry name" value="MinE"/>
    <property type="match status" value="1"/>
</dbReference>
<dbReference type="InterPro" id="IPR005527">
    <property type="entry name" value="MinE"/>
</dbReference>
<dbReference type="InterPro" id="IPR036707">
    <property type="entry name" value="MinE_sf"/>
</dbReference>
<dbReference type="NCBIfam" id="TIGR01215">
    <property type="entry name" value="minE"/>
    <property type="match status" value="1"/>
</dbReference>
<dbReference type="NCBIfam" id="NF001422">
    <property type="entry name" value="PRK00296.1"/>
    <property type="match status" value="1"/>
</dbReference>
<dbReference type="NCBIfam" id="NF010595">
    <property type="entry name" value="PRK13989.1"/>
    <property type="match status" value="1"/>
</dbReference>
<dbReference type="Pfam" id="PF03776">
    <property type="entry name" value="MinE"/>
    <property type="match status" value="1"/>
</dbReference>
<dbReference type="SUPFAM" id="SSF55229">
    <property type="entry name" value="Cell division protein MinE topological specificity domain"/>
    <property type="match status" value="1"/>
</dbReference>
<accession>A0K5G1</accession>
<gene>
    <name evidence="1" type="primary">minE</name>
    <name type="ordered locus">Bcen2424_0985</name>
</gene>
<feature type="chain" id="PRO_0000298087" description="Cell division topological specificity factor">
    <location>
        <begin position="1"/>
        <end position="84"/>
    </location>
</feature>
<comment type="function">
    <text evidence="1">Prevents the cell division inhibition by proteins MinC and MinD at internal division sites while permitting inhibition at polar sites. This ensures cell division at the proper site by restricting the formation of a division septum at the midpoint of the long axis of the cell.</text>
</comment>
<comment type="similarity">
    <text evidence="1">Belongs to the MinE family.</text>
</comment>
<reference key="1">
    <citation type="submission" date="2006-08" db="EMBL/GenBank/DDBJ databases">
        <title>Complete sequence of chromosome 1 of Burkholderia cenocepacia HI2424.</title>
        <authorList>
            <person name="Copeland A."/>
            <person name="Lucas S."/>
            <person name="Lapidus A."/>
            <person name="Barry K."/>
            <person name="Detter J.C."/>
            <person name="Glavina del Rio T."/>
            <person name="Hammon N."/>
            <person name="Israni S."/>
            <person name="Pitluck S."/>
            <person name="Chain P."/>
            <person name="Malfatti S."/>
            <person name="Shin M."/>
            <person name="Vergez L."/>
            <person name="Schmutz J."/>
            <person name="Larimer F."/>
            <person name="Land M."/>
            <person name="Hauser L."/>
            <person name="Kyrpides N."/>
            <person name="Kim E."/>
            <person name="LiPuma J.J."/>
            <person name="Gonzalez C.F."/>
            <person name="Konstantinidis K."/>
            <person name="Tiedje J.M."/>
            <person name="Richardson P."/>
        </authorList>
    </citation>
    <scope>NUCLEOTIDE SEQUENCE [LARGE SCALE GENOMIC DNA]</scope>
    <source>
        <strain>HI2424</strain>
    </source>
</reference>
<protein>
    <recommendedName>
        <fullName evidence="1">Cell division topological specificity factor</fullName>
    </recommendedName>
</protein>
<evidence type="ECO:0000255" key="1">
    <source>
        <dbReference type="HAMAP-Rule" id="MF_00262"/>
    </source>
</evidence>
<proteinExistence type="inferred from homology"/>